<protein>
    <recommendedName>
        <fullName evidence="1">Small ribosomal subunit protein bS16c</fullName>
    </recommendedName>
    <alternativeName>
        <fullName evidence="2">30S ribosomal protein S16, chloroplastic</fullName>
    </alternativeName>
</protein>
<reference key="1">
    <citation type="journal article" date="2004" name="DNA Res.">
        <title>Complete chloroplast genome sequence from Korea ginseng (Panax schinseng Nees) and comparative analysis of sequence evolution among 17 vascular plants.</title>
        <authorList>
            <person name="Kim K.-J."/>
            <person name="Lee H.-L."/>
        </authorList>
    </citation>
    <scope>NUCLEOTIDE SEQUENCE [LARGE SCALE GENOMIC DNA]</scope>
</reference>
<evidence type="ECO:0000255" key="1">
    <source>
        <dbReference type="HAMAP-Rule" id="MF_00385"/>
    </source>
</evidence>
<evidence type="ECO:0000305" key="2"/>
<geneLocation type="chloroplast"/>
<name>RR16_PANGI</name>
<gene>
    <name evidence="1" type="primary">rps16</name>
    <name type="ORF">PSC0052</name>
</gene>
<organism>
    <name type="scientific">Panax ginseng</name>
    <name type="common">Korean ginseng</name>
    <dbReference type="NCBI Taxonomy" id="4054"/>
    <lineage>
        <taxon>Eukaryota</taxon>
        <taxon>Viridiplantae</taxon>
        <taxon>Streptophyta</taxon>
        <taxon>Embryophyta</taxon>
        <taxon>Tracheophyta</taxon>
        <taxon>Spermatophyta</taxon>
        <taxon>Magnoliopsida</taxon>
        <taxon>eudicotyledons</taxon>
        <taxon>Gunneridae</taxon>
        <taxon>Pentapetalae</taxon>
        <taxon>asterids</taxon>
        <taxon>campanulids</taxon>
        <taxon>Apiales</taxon>
        <taxon>Araliaceae</taxon>
        <taxon>Panax</taxon>
    </lineage>
</organism>
<feature type="chain" id="PRO_0000167313" description="Small ribosomal subunit protein bS16c">
    <location>
        <begin position="1"/>
        <end position="78"/>
    </location>
</feature>
<comment type="subcellular location">
    <subcellularLocation>
        <location>Plastid</location>
        <location>Chloroplast</location>
    </subcellularLocation>
</comment>
<comment type="similarity">
    <text evidence="1">Belongs to the bacterial ribosomal protein bS16 family.</text>
</comment>
<proteinExistence type="inferred from homology"/>
<sequence length="78" mass="9078">MVKLRLKRCGRKQRAVYRIVAIDVRSRREGRDLRKVGFYDPIKNQSCLNVPAILYFLEKGAQPTGTVRDILKKAEVFK</sequence>
<dbReference type="EMBL" id="AY582139">
    <property type="protein sequence ID" value="AAT98491.1"/>
    <property type="molecule type" value="Genomic_DNA"/>
</dbReference>
<dbReference type="RefSeq" id="YP_086948.1">
    <property type="nucleotide sequence ID" value="NC_006290.1"/>
</dbReference>
<dbReference type="SMR" id="Q68S24"/>
<dbReference type="GeneID" id="3021543"/>
<dbReference type="GO" id="GO:0009507">
    <property type="term" value="C:chloroplast"/>
    <property type="evidence" value="ECO:0007669"/>
    <property type="project" value="UniProtKB-SubCell"/>
</dbReference>
<dbReference type="GO" id="GO:0005739">
    <property type="term" value="C:mitochondrion"/>
    <property type="evidence" value="ECO:0007669"/>
    <property type="project" value="GOC"/>
</dbReference>
<dbReference type="GO" id="GO:0015935">
    <property type="term" value="C:small ribosomal subunit"/>
    <property type="evidence" value="ECO:0007669"/>
    <property type="project" value="TreeGrafter"/>
</dbReference>
<dbReference type="GO" id="GO:0003735">
    <property type="term" value="F:structural constituent of ribosome"/>
    <property type="evidence" value="ECO:0007669"/>
    <property type="project" value="InterPro"/>
</dbReference>
<dbReference type="GO" id="GO:0032543">
    <property type="term" value="P:mitochondrial translation"/>
    <property type="evidence" value="ECO:0007669"/>
    <property type="project" value="TreeGrafter"/>
</dbReference>
<dbReference type="FunFam" id="3.30.1320.10:FF:000003">
    <property type="entry name" value="30S ribosomal protein S16, chloroplastic"/>
    <property type="match status" value="1"/>
</dbReference>
<dbReference type="Gene3D" id="3.30.1320.10">
    <property type="match status" value="1"/>
</dbReference>
<dbReference type="HAMAP" id="MF_00385">
    <property type="entry name" value="Ribosomal_bS16"/>
    <property type="match status" value="1"/>
</dbReference>
<dbReference type="InterPro" id="IPR000307">
    <property type="entry name" value="Ribosomal_bS16"/>
</dbReference>
<dbReference type="InterPro" id="IPR020592">
    <property type="entry name" value="Ribosomal_bS16_CS"/>
</dbReference>
<dbReference type="InterPro" id="IPR023803">
    <property type="entry name" value="Ribosomal_bS16_dom_sf"/>
</dbReference>
<dbReference type="NCBIfam" id="TIGR00002">
    <property type="entry name" value="S16"/>
    <property type="match status" value="1"/>
</dbReference>
<dbReference type="PANTHER" id="PTHR12919">
    <property type="entry name" value="30S RIBOSOMAL PROTEIN S16"/>
    <property type="match status" value="1"/>
</dbReference>
<dbReference type="PANTHER" id="PTHR12919:SF20">
    <property type="entry name" value="SMALL RIBOSOMAL SUBUNIT PROTEIN BS16M"/>
    <property type="match status" value="1"/>
</dbReference>
<dbReference type="Pfam" id="PF00886">
    <property type="entry name" value="Ribosomal_S16"/>
    <property type="match status" value="1"/>
</dbReference>
<dbReference type="SUPFAM" id="SSF54565">
    <property type="entry name" value="Ribosomal protein S16"/>
    <property type="match status" value="1"/>
</dbReference>
<dbReference type="PROSITE" id="PS00732">
    <property type="entry name" value="RIBOSOMAL_S16"/>
    <property type="match status" value="1"/>
</dbReference>
<keyword id="KW-0150">Chloroplast</keyword>
<keyword id="KW-0934">Plastid</keyword>
<keyword id="KW-0687">Ribonucleoprotein</keyword>
<keyword id="KW-0689">Ribosomal protein</keyword>
<accession>Q68S24</accession>